<sequence length="256" mass="27228">MLNIGPFSFHSRLLLGTGKFPDFDVQQKAIDVSEAEVLTFAVRRMDIFDAKQPNLLEKLDVKKYKLLPNTAGAKNAEEAVRIAKLAKASGLCDMIKVEVIGDDRTLLPDPVETLRASEMLLEEGFIVLPYTSDDVVLARKLQELGVHAIMPGASPIGSGLGIVNPLNLSFIIEQATVPVIVDAGIGSPADAAFAMELGADGVLLNTAVSGAKDPIKMAQAMKLSIEAGRLGFEAGRIARKRCATASSPLEGMSVVE</sequence>
<accession>Q81UX4</accession>
<accession>Q6I356</accession>
<accession>Q6KWX5</accession>
<gene>
    <name evidence="1" type="primary">thiG</name>
    <name type="ordered locus">BA_0732</name>
    <name type="ordered locus">GBAA_0732</name>
    <name type="ordered locus">BAS0698</name>
</gene>
<dbReference type="EC" id="2.8.1.10" evidence="1"/>
<dbReference type="EMBL" id="AE016879">
    <property type="protein sequence ID" value="AAP24743.1"/>
    <property type="molecule type" value="Genomic_DNA"/>
</dbReference>
<dbReference type="EMBL" id="AE017334">
    <property type="protein sequence ID" value="AAT29840.1"/>
    <property type="molecule type" value="Genomic_DNA"/>
</dbReference>
<dbReference type="EMBL" id="AE017225">
    <property type="protein sequence ID" value="AAT53025.1"/>
    <property type="status" value="ALT_INIT"/>
    <property type="molecule type" value="Genomic_DNA"/>
</dbReference>
<dbReference type="RefSeq" id="NP_843257.1">
    <property type="nucleotide sequence ID" value="NC_003997.3"/>
</dbReference>
<dbReference type="RefSeq" id="WP_000931993.1">
    <property type="nucleotide sequence ID" value="NZ_WXXJ01000017.1"/>
</dbReference>
<dbReference type="SMR" id="Q81UX4"/>
<dbReference type="STRING" id="261594.GBAA_0732"/>
<dbReference type="DNASU" id="1088315"/>
<dbReference type="GeneID" id="45020812"/>
<dbReference type="KEGG" id="ban:BA_0732"/>
<dbReference type="KEGG" id="banh:HYU01_04030"/>
<dbReference type="KEGG" id="bar:GBAA_0732"/>
<dbReference type="KEGG" id="bat:BAS0698"/>
<dbReference type="PATRIC" id="fig|198094.11.peg.732"/>
<dbReference type="eggNOG" id="COG2022">
    <property type="taxonomic scope" value="Bacteria"/>
</dbReference>
<dbReference type="HOGENOM" id="CLU_062233_1_0_9"/>
<dbReference type="OMA" id="PHNFQLI"/>
<dbReference type="OrthoDB" id="9805935at2"/>
<dbReference type="UniPathway" id="UPA00060"/>
<dbReference type="Proteomes" id="UP000000427">
    <property type="component" value="Chromosome"/>
</dbReference>
<dbReference type="Proteomes" id="UP000000594">
    <property type="component" value="Chromosome"/>
</dbReference>
<dbReference type="GO" id="GO:0005737">
    <property type="term" value="C:cytoplasm"/>
    <property type="evidence" value="ECO:0007669"/>
    <property type="project" value="UniProtKB-SubCell"/>
</dbReference>
<dbReference type="GO" id="GO:1990107">
    <property type="term" value="F:thiazole synthase activity"/>
    <property type="evidence" value="ECO:0007669"/>
    <property type="project" value="UniProtKB-EC"/>
</dbReference>
<dbReference type="GO" id="GO:0009229">
    <property type="term" value="P:thiamine diphosphate biosynthetic process"/>
    <property type="evidence" value="ECO:0007669"/>
    <property type="project" value="UniProtKB-UniRule"/>
</dbReference>
<dbReference type="CDD" id="cd04728">
    <property type="entry name" value="ThiG"/>
    <property type="match status" value="1"/>
</dbReference>
<dbReference type="FunFam" id="3.20.20.70:FF:000049">
    <property type="entry name" value="Thiazole synthase"/>
    <property type="match status" value="1"/>
</dbReference>
<dbReference type="Gene3D" id="3.20.20.70">
    <property type="entry name" value="Aldolase class I"/>
    <property type="match status" value="1"/>
</dbReference>
<dbReference type="HAMAP" id="MF_00443">
    <property type="entry name" value="ThiG"/>
    <property type="match status" value="1"/>
</dbReference>
<dbReference type="InterPro" id="IPR013785">
    <property type="entry name" value="Aldolase_TIM"/>
</dbReference>
<dbReference type="InterPro" id="IPR033983">
    <property type="entry name" value="Thiazole_synthase_ThiG"/>
</dbReference>
<dbReference type="InterPro" id="IPR008867">
    <property type="entry name" value="ThiG"/>
</dbReference>
<dbReference type="PANTHER" id="PTHR34266">
    <property type="entry name" value="THIAZOLE SYNTHASE"/>
    <property type="match status" value="1"/>
</dbReference>
<dbReference type="PANTHER" id="PTHR34266:SF2">
    <property type="entry name" value="THIAZOLE SYNTHASE"/>
    <property type="match status" value="1"/>
</dbReference>
<dbReference type="Pfam" id="PF05690">
    <property type="entry name" value="ThiG"/>
    <property type="match status" value="1"/>
</dbReference>
<dbReference type="SUPFAM" id="SSF110399">
    <property type="entry name" value="ThiG-like"/>
    <property type="match status" value="1"/>
</dbReference>
<protein>
    <recommendedName>
        <fullName evidence="1">Thiazole synthase</fullName>
        <ecNumber evidence="1">2.8.1.10</ecNumber>
    </recommendedName>
</protein>
<keyword id="KW-0963">Cytoplasm</keyword>
<keyword id="KW-1185">Reference proteome</keyword>
<keyword id="KW-0704">Schiff base</keyword>
<keyword id="KW-0784">Thiamine biosynthesis</keyword>
<keyword id="KW-0808">Transferase</keyword>
<name>THIG_BACAN</name>
<feature type="chain" id="PRO_0000162779" description="Thiazole synthase">
    <location>
        <begin position="1"/>
        <end position="256"/>
    </location>
</feature>
<feature type="active site" description="Schiff-base intermediate with DXP" evidence="1">
    <location>
        <position position="96"/>
    </location>
</feature>
<feature type="binding site" evidence="1">
    <location>
        <position position="157"/>
    </location>
    <ligand>
        <name>1-deoxy-D-xylulose 5-phosphate</name>
        <dbReference type="ChEBI" id="CHEBI:57792"/>
    </ligand>
</feature>
<feature type="binding site" evidence="1">
    <location>
        <begin position="183"/>
        <end position="184"/>
    </location>
    <ligand>
        <name>1-deoxy-D-xylulose 5-phosphate</name>
        <dbReference type="ChEBI" id="CHEBI:57792"/>
    </ligand>
</feature>
<feature type="binding site" evidence="1">
    <location>
        <begin position="205"/>
        <end position="206"/>
    </location>
    <ligand>
        <name>1-deoxy-D-xylulose 5-phosphate</name>
        <dbReference type="ChEBI" id="CHEBI:57792"/>
    </ligand>
</feature>
<proteinExistence type="inferred from homology"/>
<reference key="1">
    <citation type="journal article" date="2003" name="Nature">
        <title>The genome sequence of Bacillus anthracis Ames and comparison to closely related bacteria.</title>
        <authorList>
            <person name="Read T.D."/>
            <person name="Peterson S.N."/>
            <person name="Tourasse N.J."/>
            <person name="Baillie L.W."/>
            <person name="Paulsen I.T."/>
            <person name="Nelson K.E."/>
            <person name="Tettelin H."/>
            <person name="Fouts D.E."/>
            <person name="Eisen J.A."/>
            <person name="Gill S.R."/>
            <person name="Holtzapple E.K."/>
            <person name="Okstad O.A."/>
            <person name="Helgason E."/>
            <person name="Rilstone J."/>
            <person name="Wu M."/>
            <person name="Kolonay J.F."/>
            <person name="Beanan M.J."/>
            <person name="Dodson R.J."/>
            <person name="Brinkac L.M."/>
            <person name="Gwinn M.L."/>
            <person name="DeBoy R.T."/>
            <person name="Madpu R."/>
            <person name="Daugherty S.C."/>
            <person name="Durkin A.S."/>
            <person name="Haft D.H."/>
            <person name="Nelson W.C."/>
            <person name="Peterson J.D."/>
            <person name="Pop M."/>
            <person name="Khouri H.M."/>
            <person name="Radune D."/>
            <person name="Benton J.L."/>
            <person name="Mahamoud Y."/>
            <person name="Jiang L."/>
            <person name="Hance I.R."/>
            <person name="Weidman J.F."/>
            <person name="Berry K.J."/>
            <person name="Plaut R.D."/>
            <person name="Wolf A.M."/>
            <person name="Watkins K.L."/>
            <person name="Nierman W.C."/>
            <person name="Hazen A."/>
            <person name="Cline R.T."/>
            <person name="Redmond C."/>
            <person name="Thwaite J.E."/>
            <person name="White O."/>
            <person name="Salzberg S.L."/>
            <person name="Thomason B."/>
            <person name="Friedlander A.M."/>
            <person name="Koehler T.M."/>
            <person name="Hanna P.C."/>
            <person name="Kolstoe A.-B."/>
            <person name="Fraser C.M."/>
        </authorList>
    </citation>
    <scope>NUCLEOTIDE SEQUENCE [LARGE SCALE GENOMIC DNA]</scope>
    <source>
        <strain>Ames / isolate Porton</strain>
    </source>
</reference>
<reference key="2">
    <citation type="journal article" date="2009" name="J. Bacteriol.">
        <title>The complete genome sequence of Bacillus anthracis Ames 'Ancestor'.</title>
        <authorList>
            <person name="Ravel J."/>
            <person name="Jiang L."/>
            <person name="Stanley S.T."/>
            <person name="Wilson M.R."/>
            <person name="Decker R.S."/>
            <person name="Read T.D."/>
            <person name="Worsham P."/>
            <person name="Keim P.S."/>
            <person name="Salzberg S.L."/>
            <person name="Fraser-Liggett C.M."/>
            <person name="Rasko D.A."/>
        </authorList>
    </citation>
    <scope>NUCLEOTIDE SEQUENCE [LARGE SCALE GENOMIC DNA]</scope>
    <source>
        <strain>Ames ancestor</strain>
    </source>
</reference>
<reference key="3">
    <citation type="submission" date="2004-01" db="EMBL/GenBank/DDBJ databases">
        <title>Complete genome sequence of Bacillus anthracis Sterne.</title>
        <authorList>
            <person name="Brettin T.S."/>
            <person name="Bruce D."/>
            <person name="Challacombe J.F."/>
            <person name="Gilna P."/>
            <person name="Han C."/>
            <person name="Hill K."/>
            <person name="Hitchcock P."/>
            <person name="Jackson P."/>
            <person name="Keim P."/>
            <person name="Longmire J."/>
            <person name="Lucas S."/>
            <person name="Okinaka R."/>
            <person name="Richardson P."/>
            <person name="Rubin E."/>
            <person name="Tice H."/>
        </authorList>
    </citation>
    <scope>NUCLEOTIDE SEQUENCE [LARGE SCALE GENOMIC DNA]</scope>
    <source>
        <strain>Sterne</strain>
    </source>
</reference>
<evidence type="ECO:0000255" key="1">
    <source>
        <dbReference type="HAMAP-Rule" id="MF_00443"/>
    </source>
</evidence>
<evidence type="ECO:0000305" key="2"/>
<comment type="function">
    <text evidence="1">Catalyzes the rearrangement of 1-deoxy-D-xylulose 5-phosphate (DXP) to produce the thiazole phosphate moiety of thiamine. Sulfur is provided by the thiocarboxylate moiety of the carrier protein ThiS. In vitro, sulfur can be provided by H(2)S.</text>
</comment>
<comment type="catalytic activity">
    <reaction evidence="1">
        <text>[ThiS sulfur-carrier protein]-C-terminal-Gly-aminoethanethioate + 2-iminoacetate + 1-deoxy-D-xylulose 5-phosphate = [ThiS sulfur-carrier protein]-C-terminal Gly-Gly + 2-[(2R,5Z)-2-carboxy-4-methylthiazol-5(2H)-ylidene]ethyl phosphate + 2 H2O + H(+)</text>
        <dbReference type="Rhea" id="RHEA:26297"/>
        <dbReference type="Rhea" id="RHEA-COMP:12909"/>
        <dbReference type="Rhea" id="RHEA-COMP:19908"/>
        <dbReference type="ChEBI" id="CHEBI:15377"/>
        <dbReference type="ChEBI" id="CHEBI:15378"/>
        <dbReference type="ChEBI" id="CHEBI:57792"/>
        <dbReference type="ChEBI" id="CHEBI:62899"/>
        <dbReference type="ChEBI" id="CHEBI:77846"/>
        <dbReference type="ChEBI" id="CHEBI:90778"/>
        <dbReference type="ChEBI" id="CHEBI:232372"/>
        <dbReference type="EC" id="2.8.1.10"/>
    </reaction>
</comment>
<comment type="pathway">
    <text evidence="1">Cofactor biosynthesis; thiamine diphosphate biosynthesis.</text>
</comment>
<comment type="subunit">
    <text evidence="1">Homotetramer. Forms heterodimers with either ThiH or ThiS.</text>
</comment>
<comment type="subcellular location">
    <subcellularLocation>
        <location evidence="1">Cytoplasm</location>
    </subcellularLocation>
</comment>
<comment type="similarity">
    <text evidence="1">Belongs to the ThiG family.</text>
</comment>
<comment type="sequence caution" evidence="2">
    <conflict type="erroneous initiation">
        <sequence resource="EMBL-CDS" id="AAT53025"/>
    </conflict>
</comment>
<organism>
    <name type="scientific">Bacillus anthracis</name>
    <dbReference type="NCBI Taxonomy" id="1392"/>
    <lineage>
        <taxon>Bacteria</taxon>
        <taxon>Bacillati</taxon>
        <taxon>Bacillota</taxon>
        <taxon>Bacilli</taxon>
        <taxon>Bacillales</taxon>
        <taxon>Bacillaceae</taxon>
        <taxon>Bacillus</taxon>
        <taxon>Bacillus cereus group</taxon>
    </lineage>
</organism>